<feature type="chain" id="PRO_0000196099" description="Cuticle protein 18.6, isoform B">
    <location>
        <begin position="1"/>
        <end position="185"/>
    </location>
</feature>
<feature type="repeat" description="1" evidence="3">
    <location>
        <begin position="21"/>
        <end position="24"/>
    </location>
</feature>
<feature type="repeat" description="2" evidence="3">
    <location>
        <begin position="33"/>
        <end position="36"/>
    </location>
</feature>
<feature type="repeat" description="3" evidence="3">
    <location>
        <begin position="41"/>
        <end position="44"/>
    </location>
</feature>
<feature type="domain" description="Chitin-binding type R&amp;R" evidence="1">
    <location>
        <begin position="64"/>
        <end position="134"/>
    </location>
</feature>
<feature type="repeat" description="4" evidence="3">
    <location>
        <begin position="133"/>
        <end position="136"/>
    </location>
</feature>
<feature type="repeat" description="5" evidence="3">
    <location>
        <begin position="139"/>
        <end position="142"/>
    </location>
</feature>
<feature type="repeat" description="6" evidence="3">
    <location>
        <begin position="150"/>
        <end position="153"/>
    </location>
</feature>
<dbReference type="GO" id="GO:0031012">
    <property type="term" value="C:extracellular matrix"/>
    <property type="evidence" value="ECO:0007669"/>
    <property type="project" value="TreeGrafter"/>
</dbReference>
<dbReference type="GO" id="GO:0005615">
    <property type="term" value="C:extracellular space"/>
    <property type="evidence" value="ECO:0007669"/>
    <property type="project" value="TreeGrafter"/>
</dbReference>
<dbReference type="GO" id="GO:0042302">
    <property type="term" value="F:structural constituent of cuticle"/>
    <property type="evidence" value="ECO:0007669"/>
    <property type="project" value="UniProtKB-KW"/>
</dbReference>
<dbReference type="InterPro" id="IPR031311">
    <property type="entry name" value="CHIT_BIND_RR_consensus"/>
</dbReference>
<dbReference type="InterPro" id="IPR000618">
    <property type="entry name" value="Insect_cuticle"/>
</dbReference>
<dbReference type="InterPro" id="IPR051217">
    <property type="entry name" value="Insect_Cuticle_Struc_Prot"/>
</dbReference>
<dbReference type="PANTHER" id="PTHR12236:SF94">
    <property type="entry name" value="CCP84AA-RELATED"/>
    <property type="match status" value="1"/>
</dbReference>
<dbReference type="PANTHER" id="PTHR12236">
    <property type="entry name" value="STRUCTURAL CONTITUENT OF CUTICLE"/>
    <property type="match status" value="1"/>
</dbReference>
<dbReference type="Pfam" id="PF00379">
    <property type="entry name" value="Chitin_bind_4"/>
    <property type="match status" value="1"/>
</dbReference>
<dbReference type="PRINTS" id="PR00947">
    <property type="entry name" value="CUTICLE"/>
</dbReference>
<dbReference type="PROSITE" id="PS00233">
    <property type="entry name" value="CHIT_BIND_RR_1"/>
    <property type="match status" value="1"/>
</dbReference>
<dbReference type="PROSITE" id="PS51155">
    <property type="entry name" value="CHIT_BIND_RR_2"/>
    <property type="match status" value="1"/>
</dbReference>
<evidence type="ECO:0000255" key="1">
    <source>
        <dbReference type="PROSITE-ProRule" id="PRU00497"/>
    </source>
</evidence>
<evidence type="ECO:0000269" key="2">
    <source>
    </source>
</evidence>
<evidence type="ECO:0000305" key="3"/>
<sequence>GYLGAPAVVAPGAPLAARGYAAPAYAAPLARYAAPVARAYAAPVARAYAPAVAATPAAVEYDPHPQYSFAYNVQDAHTGDSKTQHESRDGDVVQGSYSLAEPDGSIRTVDYTADPVNGFNAVVHKEAGAHPAAAPVAVAAPVAHAPVAVAAPVRAYAAPLARAAYAAPIARAAYGPALAYGGAYH</sequence>
<name>CU18B_LOCMI</name>
<keyword id="KW-0193">Cuticle</keyword>
<keyword id="KW-0903">Direct protein sequencing</keyword>
<keyword id="KW-0677">Repeat</keyword>
<accession>P83995</accession>
<comment type="function">
    <text evidence="2">Component of the cuticle of migratory locust which contains more than 100 different structural proteins.</text>
</comment>
<comment type="domain">
    <text evidence="3">The tetrapeptide (A-A-P-[AV]) repeats found throughout the protein are also present in many proteins constituting the protective envelope of other species.</text>
</comment>
<comment type="mass spectrometry"/>
<comment type="mass spectrometry"/>
<protein>
    <recommendedName>
        <fullName>Cuticle protein 18.6, isoform B</fullName>
    </recommendedName>
    <alternativeName>
        <fullName>LM-ACP 18.6B</fullName>
        <shortName>LM-18.6B</shortName>
    </alternativeName>
</protein>
<proteinExistence type="evidence at protein level"/>
<reference evidence="3" key="1">
    <citation type="journal article" date="2003" name="Biochim. Biophys. Acta">
        <title>Sequence determination of three cuticular proteins and isoforms from the migratory locust, Locusta migratoria, using a combination of Edman degradation and mass spectrometric techniques.</title>
        <authorList>
            <person name="Kalume D.E."/>
            <person name="Kieffer S."/>
            <person name="Rafn K."/>
            <person name="Skou L."/>
            <person name="Andersen S.O."/>
            <person name="Roepstorff P."/>
        </authorList>
    </citation>
    <scope>PROTEIN SEQUENCE</scope>
    <scope>FUNCTION</scope>
    <scope>MASS SPECTROMETRY</scope>
    <source>
        <tissue evidence="2">Pharate adult cuticle</tissue>
    </source>
</reference>
<organism>
    <name type="scientific">Locusta migratoria</name>
    <name type="common">Migratory locust</name>
    <dbReference type="NCBI Taxonomy" id="7004"/>
    <lineage>
        <taxon>Eukaryota</taxon>
        <taxon>Metazoa</taxon>
        <taxon>Ecdysozoa</taxon>
        <taxon>Arthropoda</taxon>
        <taxon>Hexapoda</taxon>
        <taxon>Insecta</taxon>
        <taxon>Pterygota</taxon>
        <taxon>Neoptera</taxon>
        <taxon>Polyneoptera</taxon>
        <taxon>Orthoptera</taxon>
        <taxon>Caelifera</taxon>
        <taxon>Acrididea</taxon>
        <taxon>Acridomorpha</taxon>
        <taxon>Acridoidea</taxon>
        <taxon>Acrididae</taxon>
        <taxon>Oedipodinae</taxon>
        <taxon>Locusta</taxon>
    </lineage>
</organism>